<comment type="subcellular location">
    <subcellularLocation>
        <location evidence="1">Bacterial flagellum basal body</location>
    </subcellularLocation>
</comment>
<comment type="similarity">
    <text evidence="2">Belongs to the FliE family.</text>
</comment>
<dbReference type="EMBL" id="AE000657">
    <property type="protein sequence ID" value="AAC07208.1"/>
    <property type="molecule type" value="Genomic_DNA"/>
</dbReference>
<dbReference type="PIR" id="G70401">
    <property type="entry name" value="G70401"/>
</dbReference>
<dbReference type="RefSeq" id="NP_213806.1">
    <property type="nucleotide sequence ID" value="NC_000918.1"/>
</dbReference>
<dbReference type="RefSeq" id="WP_010880744.1">
    <property type="nucleotide sequence ID" value="NC_000918.1"/>
</dbReference>
<dbReference type="SMR" id="O67242"/>
<dbReference type="STRING" id="224324.aq_1182a"/>
<dbReference type="EnsemblBacteria" id="AAC07208">
    <property type="protein sequence ID" value="AAC07208"/>
    <property type="gene ID" value="aq_1182a"/>
</dbReference>
<dbReference type="KEGG" id="aae:aq_1182a"/>
<dbReference type="eggNOG" id="COG1677">
    <property type="taxonomic scope" value="Bacteria"/>
</dbReference>
<dbReference type="HOGENOM" id="CLU_147249_3_1_0"/>
<dbReference type="InParanoid" id="O67242"/>
<dbReference type="OrthoDB" id="9812413at2"/>
<dbReference type="Proteomes" id="UP000000798">
    <property type="component" value="Chromosome"/>
</dbReference>
<dbReference type="GO" id="GO:0009425">
    <property type="term" value="C:bacterial-type flagellum basal body"/>
    <property type="evidence" value="ECO:0007669"/>
    <property type="project" value="UniProtKB-SubCell"/>
</dbReference>
<dbReference type="GO" id="GO:0003774">
    <property type="term" value="F:cytoskeletal motor activity"/>
    <property type="evidence" value="ECO:0007669"/>
    <property type="project" value="InterPro"/>
</dbReference>
<dbReference type="GO" id="GO:0005198">
    <property type="term" value="F:structural molecule activity"/>
    <property type="evidence" value="ECO:0007669"/>
    <property type="project" value="InterPro"/>
</dbReference>
<dbReference type="GO" id="GO:0044780">
    <property type="term" value="P:bacterial-type flagellum assembly"/>
    <property type="evidence" value="ECO:0000318"/>
    <property type="project" value="GO_Central"/>
</dbReference>
<dbReference type="GO" id="GO:0071973">
    <property type="term" value="P:bacterial-type flagellum-dependent cell motility"/>
    <property type="evidence" value="ECO:0007669"/>
    <property type="project" value="InterPro"/>
</dbReference>
<dbReference type="HAMAP" id="MF_00724">
    <property type="entry name" value="FliE"/>
    <property type="match status" value="1"/>
</dbReference>
<dbReference type="InterPro" id="IPR001624">
    <property type="entry name" value="FliE"/>
</dbReference>
<dbReference type="NCBIfam" id="TIGR00205">
    <property type="entry name" value="fliE"/>
    <property type="match status" value="1"/>
</dbReference>
<dbReference type="PANTHER" id="PTHR34653">
    <property type="match status" value="1"/>
</dbReference>
<dbReference type="PANTHER" id="PTHR34653:SF1">
    <property type="entry name" value="FLAGELLAR HOOK-BASAL BODY COMPLEX PROTEIN FLIE"/>
    <property type="match status" value="1"/>
</dbReference>
<dbReference type="Pfam" id="PF02049">
    <property type="entry name" value="FliE"/>
    <property type="match status" value="1"/>
</dbReference>
<dbReference type="PRINTS" id="PR01006">
    <property type="entry name" value="FLGHOOKFLIE"/>
</dbReference>
<name>FLIE_AQUAE</name>
<accession>O67242</accession>
<evidence type="ECO:0000250" key="1"/>
<evidence type="ECO:0000305" key="2"/>
<proteinExistence type="inferred from homology"/>
<organism>
    <name type="scientific">Aquifex aeolicus (strain VF5)</name>
    <dbReference type="NCBI Taxonomy" id="224324"/>
    <lineage>
        <taxon>Bacteria</taxon>
        <taxon>Pseudomonadati</taxon>
        <taxon>Aquificota</taxon>
        <taxon>Aquificia</taxon>
        <taxon>Aquificales</taxon>
        <taxon>Aquificaceae</taxon>
        <taxon>Aquifex</taxon>
    </lineage>
</organism>
<reference key="1">
    <citation type="journal article" date="1998" name="Nature">
        <title>The complete genome of the hyperthermophilic bacterium Aquifex aeolicus.</title>
        <authorList>
            <person name="Deckert G."/>
            <person name="Warren P.V."/>
            <person name="Gaasterland T."/>
            <person name="Young W.G."/>
            <person name="Lenox A.L."/>
            <person name="Graham D.E."/>
            <person name="Overbeek R."/>
            <person name="Snead M.A."/>
            <person name="Keller M."/>
            <person name="Aujay M."/>
            <person name="Huber R."/>
            <person name="Feldman R.A."/>
            <person name="Short J.M."/>
            <person name="Olsen G.J."/>
            <person name="Swanson R.V."/>
        </authorList>
    </citation>
    <scope>NUCLEOTIDE SEQUENCE [LARGE SCALE GENOMIC DNA]</scope>
    <source>
        <strain>VF5</strain>
    </source>
</reference>
<sequence length="93" mass="10764">MEVGKLGFIPKLFEVQQNVKGEDIVENFVNFVEWVNEKQLKSKKLKEAVLEGRDVPLHEIVIEAEKAKVALNLLIEVRNKLLEAYNELMKMQV</sequence>
<protein>
    <recommendedName>
        <fullName>Flagellar hook-basal body complex protein FliE</fullName>
    </recommendedName>
</protein>
<feature type="chain" id="PRO_0000105527" description="Flagellar hook-basal body complex protein FliE">
    <location>
        <begin position="1"/>
        <end position="93"/>
    </location>
</feature>
<gene>
    <name type="primary">fliE</name>
    <name type="ordered locus">aq_1182.1</name>
    <name type="ORF">aq_1182A</name>
</gene>
<keyword id="KW-0975">Bacterial flagellum</keyword>
<keyword id="KW-1185">Reference proteome</keyword>